<accession>A0PM27</accession>
<name>END4_MYCUA</name>
<evidence type="ECO:0000255" key="1">
    <source>
        <dbReference type="HAMAP-Rule" id="MF_00152"/>
    </source>
</evidence>
<sequence length="252" mass="27037">MLIGSHVSPQDPLAAAQAEGAEVVQIFLGNPQSWKAPRPREDAAQLKAAALPIYVHAPYLINLASANNKVRIPSRKILQQTCDAAADIGAAAVIVHGGHVADDNDLDEGFQRWRKALDQLQTDVPVYLENTAGGEHAMARHFDTIARLWDVIGDTGIGFCLDTCHAWAAGEQLVHGVDRIKAVTGRIDLVHCNDSRDAAGSGRDRHANLGAGQIDPELLVAAVRAADAPIICETAEEGRKDDIAFLREKLNS</sequence>
<gene>
    <name evidence="1" type="primary">nfo</name>
    <name type="ordered locus">MUL_0751</name>
</gene>
<organism>
    <name type="scientific">Mycobacterium ulcerans (strain Agy99)</name>
    <dbReference type="NCBI Taxonomy" id="362242"/>
    <lineage>
        <taxon>Bacteria</taxon>
        <taxon>Bacillati</taxon>
        <taxon>Actinomycetota</taxon>
        <taxon>Actinomycetes</taxon>
        <taxon>Mycobacteriales</taxon>
        <taxon>Mycobacteriaceae</taxon>
        <taxon>Mycobacterium</taxon>
        <taxon>Mycobacterium ulcerans group</taxon>
    </lineage>
</organism>
<comment type="function">
    <text evidence="1">Endonuclease IV plays a role in DNA repair. It cleaves phosphodiester bonds at apurinic or apyrimidinic (AP) sites, generating a 3'-hydroxyl group and a 5'-terminal sugar phosphate.</text>
</comment>
<comment type="catalytic activity">
    <reaction evidence="1">
        <text>Endonucleolytic cleavage to 5'-phosphooligonucleotide end-products.</text>
        <dbReference type="EC" id="3.1.21.2"/>
    </reaction>
</comment>
<comment type="cofactor">
    <cofactor evidence="1">
        <name>Zn(2+)</name>
        <dbReference type="ChEBI" id="CHEBI:29105"/>
    </cofactor>
    <text evidence="1">Binds 3 Zn(2+) ions.</text>
</comment>
<comment type="similarity">
    <text evidence="1">Belongs to the AP endonuclease 2 family.</text>
</comment>
<feature type="chain" id="PRO_1000011324" description="Probable endonuclease 4">
    <location>
        <begin position="1"/>
        <end position="252"/>
    </location>
</feature>
<feature type="binding site" evidence="1">
    <location>
        <position position="56"/>
    </location>
    <ligand>
        <name>Zn(2+)</name>
        <dbReference type="ChEBI" id="CHEBI:29105"/>
        <label>1</label>
    </ligand>
</feature>
<feature type="binding site" evidence="1">
    <location>
        <position position="96"/>
    </location>
    <ligand>
        <name>Zn(2+)</name>
        <dbReference type="ChEBI" id="CHEBI:29105"/>
        <label>1</label>
    </ligand>
</feature>
<feature type="binding site" evidence="1">
    <location>
        <position position="129"/>
    </location>
    <ligand>
        <name>Zn(2+)</name>
        <dbReference type="ChEBI" id="CHEBI:29105"/>
        <label>1</label>
    </ligand>
</feature>
<feature type="binding site" evidence="1">
    <location>
        <position position="129"/>
    </location>
    <ligand>
        <name>Zn(2+)</name>
        <dbReference type="ChEBI" id="CHEBI:29105"/>
        <label>2</label>
    </ligand>
</feature>
<feature type="binding site" evidence="1">
    <location>
        <position position="162"/>
    </location>
    <ligand>
        <name>Zn(2+)</name>
        <dbReference type="ChEBI" id="CHEBI:29105"/>
        <label>2</label>
    </ligand>
</feature>
<feature type="binding site" evidence="1">
    <location>
        <position position="165"/>
    </location>
    <ligand>
        <name>Zn(2+)</name>
        <dbReference type="ChEBI" id="CHEBI:29105"/>
        <label>3</label>
    </ligand>
</feature>
<feature type="binding site" evidence="1">
    <location>
        <position position="191"/>
    </location>
    <ligand>
        <name>Zn(2+)</name>
        <dbReference type="ChEBI" id="CHEBI:29105"/>
        <label>2</label>
    </ligand>
</feature>
<feature type="binding site" evidence="1">
    <location>
        <position position="204"/>
    </location>
    <ligand>
        <name>Zn(2+)</name>
        <dbReference type="ChEBI" id="CHEBI:29105"/>
        <label>3</label>
    </ligand>
</feature>
<feature type="binding site" evidence="1">
    <location>
        <position position="206"/>
    </location>
    <ligand>
        <name>Zn(2+)</name>
        <dbReference type="ChEBI" id="CHEBI:29105"/>
        <label>3</label>
    </ligand>
</feature>
<feature type="binding site" evidence="1">
    <location>
        <position position="233"/>
    </location>
    <ligand>
        <name>Zn(2+)</name>
        <dbReference type="ChEBI" id="CHEBI:29105"/>
        <label>2</label>
    </ligand>
</feature>
<keyword id="KW-0227">DNA damage</keyword>
<keyword id="KW-0234">DNA repair</keyword>
<keyword id="KW-0255">Endonuclease</keyword>
<keyword id="KW-0378">Hydrolase</keyword>
<keyword id="KW-0479">Metal-binding</keyword>
<keyword id="KW-0540">Nuclease</keyword>
<keyword id="KW-0862">Zinc</keyword>
<dbReference type="EC" id="3.1.21.2" evidence="1"/>
<dbReference type="EMBL" id="CP000325">
    <property type="protein sequence ID" value="ABL03396.1"/>
    <property type="molecule type" value="Genomic_DNA"/>
</dbReference>
<dbReference type="RefSeq" id="WP_011739021.1">
    <property type="nucleotide sequence ID" value="NC_008611.1"/>
</dbReference>
<dbReference type="SMR" id="A0PM27"/>
<dbReference type="KEGG" id="mul:MUL_0751"/>
<dbReference type="eggNOG" id="COG0648">
    <property type="taxonomic scope" value="Bacteria"/>
</dbReference>
<dbReference type="HOGENOM" id="CLU_025885_0_2_11"/>
<dbReference type="Proteomes" id="UP000000765">
    <property type="component" value="Chromosome"/>
</dbReference>
<dbReference type="GO" id="GO:0008833">
    <property type="term" value="F:deoxyribonuclease IV (phage-T4-induced) activity"/>
    <property type="evidence" value="ECO:0007669"/>
    <property type="project" value="UniProtKB-UniRule"/>
</dbReference>
<dbReference type="GO" id="GO:0003677">
    <property type="term" value="F:DNA binding"/>
    <property type="evidence" value="ECO:0007669"/>
    <property type="project" value="InterPro"/>
</dbReference>
<dbReference type="GO" id="GO:0003906">
    <property type="term" value="F:DNA-(apurinic or apyrimidinic site) endonuclease activity"/>
    <property type="evidence" value="ECO:0007669"/>
    <property type="project" value="TreeGrafter"/>
</dbReference>
<dbReference type="GO" id="GO:0008081">
    <property type="term" value="F:phosphoric diester hydrolase activity"/>
    <property type="evidence" value="ECO:0007669"/>
    <property type="project" value="TreeGrafter"/>
</dbReference>
<dbReference type="GO" id="GO:0008270">
    <property type="term" value="F:zinc ion binding"/>
    <property type="evidence" value="ECO:0007669"/>
    <property type="project" value="UniProtKB-UniRule"/>
</dbReference>
<dbReference type="GO" id="GO:0006284">
    <property type="term" value="P:base-excision repair"/>
    <property type="evidence" value="ECO:0007669"/>
    <property type="project" value="TreeGrafter"/>
</dbReference>
<dbReference type="CDD" id="cd00019">
    <property type="entry name" value="AP2Ec"/>
    <property type="match status" value="1"/>
</dbReference>
<dbReference type="Gene3D" id="3.20.20.150">
    <property type="entry name" value="Divalent-metal-dependent TIM barrel enzymes"/>
    <property type="match status" value="1"/>
</dbReference>
<dbReference type="HAMAP" id="MF_00152">
    <property type="entry name" value="Nfo"/>
    <property type="match status" value="1"/>
</dbReference>
<dbReference type="InterPro" id="IPR001719">
    <property type="entry name" value="AP_endonuc_2"/>
</dbReference>
<dbReference type="InterPro" id="IPR018246">
    <property type="entry name" value="AP_endonuc_F2_Zn_BS"/>
</dbReference>
<dbReference type="InterPro" id="IPR036237">
    <property type="entry name" value="Xyl_isomerase-like_sf"/>
</dbReference>
<dbReference type="InterPro" id="IPR013022">
    <property type="entry name" value="Xyl_isomerase-like_TIM-brl"/>
</dbReference>
<dbReference type="NCBIfam" id="TIGR00587">
    <property type="entry name" value="nfo"/>
    <property type="match status" value="1"/>
</dbReference>
<dbReference type="NCBIfam" id="NF002198">
    <property type="entry name" value="PRK01060.1-3"/>
    <property type="match status" value="1"/>
</dbReference>
<dbReference type="PANTHER" id="PTHR21445:SF0">
    <property type="entry name" value="APURINIC-APYRIMIDINIC ENDONUCLEASE"/>
    <property type="match status" value="1"/>
</dbReference>
<dbReference type="PANTHER" id="PTHR21445">
    <property type="entry name" value="ENDONUCLEASE IV ENDODEOXYRIBONUCLEASE IV"/>
    <property type="match status" value="1"/>
</dbReference>
<dbReference type="Pfam" id="PF01261">
    <property type="entry name" value="AP_endonuc_2"/>
    <property type="match status" value="1"/>
</dbReference>
<dbReference type="SMART" id="SM00518">
    <property type="entry name" value="AP2Ec"/>
    <property type="match status" value="1"/>
</dbReference>
<dbReference type="SUPFAM" id="SSF51658">
    <property type="entry name" value="Xylose isomerase-like"/>
    <property type="match status" value="1"/>
</dbReference>
<dbReference type="PROSITE" id="PS00729">
    <property type="entry name" value="AP_NUCLEASE_F2_1"/>
    <property type="match status" value="1"/>
</dbReference>
<dbReference type="PROSITE" id="PS00730">
    <property type="entry name" value="AP_NUCLEASE_F2_2"/>
    <property type="match status" value="1"/>
</dbReference>
<dbReference type="PROSITE" id="PS00731">
    <property type="entry name" value="AP_NUCLEASE_F2_3"/>
    <property type="match status" value="1"/>
</dbReference>
<dbReference type="PROSITE" id="PS51432">
    <property type="entry name" value="AP_NUCLEASE_F2_4"/>
    <property type="match status" value="1"/>
</dbReference>
<protein>
    <recommendedName>
        <fullName evidence="1">Probable endonuclease 4</fullName>
        <ecNumber evidence="1">3.1.21.2</ecNumber>
    </recommendedName>
    <alternativeName>
        <fullName evidence="1">Endodeoxyribonuclease IV</fullName>
    </alternativeName>
    <alternativeName>
        <fullName evidence="1">Endonuclease IV</fullName>
    </alternativeName>
</protein>
<reference key="1">
    <citation type="journal article" date="2007" name="Genome Res.">
        <title>Reductive evolution and niche adaptation inferred from the genome of Mycobacterium ulcerans, the causative agent of Buruli ulcer.</title>
        <authorList>
            <person name="Stinear T.P."/>
            <person name="Seemann T."/>
            <person name="Pidot S."/>
            <person name="Frigui W."/>
            <person name="Reysset G."/>
            <person name="Garnier T."/>
            <person name="Meurice G."/>
            <person name="Simon D."/>
            <person name="Bouchier C."/>
            <person name="Ma L."/>
            <person name="Tichit M."/>
            <person name="Porter J.L."/>
            <person name="Ryan J."/>
            <person name="Johnson P.D.R."/>
            <person name="Davies J.K."/>
            <person name="Jenkin G.A."/>
            <person name="Small P.L.C."/>
            <person name="Jones L.M."/>
            <person name="Tekaia F."/>
            <person name="Laval F."/>
            <person name="Daffe M."/>
            <person name="Parkhill J."/>
            <person name="Cole S.T."/>
        </authorList>
    </citation>
    <scope>NUCLEOTIDE SEQUENCE [LARGE SCALE GENOMIC DNA]</scope>
    <source>
        <strain>Agy99</strain>
    </source>
</reference>
<proteinExistence type="inferred from homology"/>